<accession>O94128</accession>
<name>TBA_ZYMTR</name>
<protein>
    <recommendedName>
        <fullName>Tubulin alpha chain</fullName>
        <ecNumber evidence="2">3.6.5.-</ecNumber>
    </recommendedName>
</protein>
<organism>
    <name type="scientific">Zymoseptoria tritici</name>
    <name type="common">Speckled leaf blotch fungus</name>
    <name type="synonym">Septoria tritici</name>
    <dbReference type="NCBI Taxonomy" id="1047171"/>
    <lineage>
        <taxon>Eukaryota</taxon>
        <taxon>Fungi</taxon>
        <taxon>Dikarya</taxon>
        <taxon>Ascomycota</taxon>
        <taxon>Pezizomycotina</taxon>
        <taxon>Dothideomycetes</taxon>
        <taxon>Dothideomycetidae</taxon>
        <taxon>Mycosphaerellales</taxon>
        <taxon>Mycosphaerellaceae</taxon>
        <taxon>Zymoseptoria</taxon>
    </lineage>
</organism>
<proteinExistence type="inferred from homology"/>
<keyword id="KW-0963">Cytoplasm</keyword>
<keyword id="KW-0206">Cytoskeleton</keyword>
<keyword id="KW-0342">GTP-binding</keyword>
<keyword id="KW-0378">Hydrolase</keyword>
<keyword id="KW-0460">Magnesium</keyword>
<keyword id="KW-0479">Metal-binding</keyword>
<keyword id="KW-0493">Microtubule</keyword>
<keyword id="KW-0547">Nucleotide-binding</keyword>
<evidence type="ECO:0000250" key="1"/>
<evidence type="ECO:0000250" key="2">
    <source>
        <dbReference type="UniProtKB" id="P68363"/>
    </source>
</evidence>
<evidence type="ECO:0000305" key="3"/>
<comment type="function">
    <text>Tubulin is the major constituent of microtubules, a cylinder consisting of laterally associated linear protofilaments composed of alpha- and beta-tubulin heterodimers. Microtubules grow by the addition of GTP-tubulin dimers to the microtubule end, where a stabilizing cap forms. Below the cap, tubulin dimers are in GDP-bound state, owing to GTPase activity of alpha-tubulin.</text>
</comment>
<comment type="catalytic activity">
    <reaction evidence="2">
        <text>GTP + H2O = GDP + phosphate + H(+)</text>
        <dbReference type="Rhea" id="RHEA:19669"/>
        <dbReference type="ChEBI" id="CHEBI:15377"/>
        <dbReference type="ChEBI" id="CHEBI:15378"/>
        <dbReference type="ChEBI" id="CHEBI:37565"/>
        <dbReference type="ChEBI" id="CHEBI:43474"/>
        <dbReference type="ChEBI" id="CHEBI:58189"/>
    </reaction>
    <physiologicalReaction direction="left-to-right" evidence="2">
        <dbReference type="Rhea" id="RHEA:19670"/>
    </physiologicalReaction>
</comment>
<comment type="cofactor">
    <cofactor evidence="2">
        <name>Mg(2+)</name>
        <dbReference type="ChEBI" id="CHEBI:18420"/>
    </cofactor>
</comment>
<comment type="subunit">
    <text>Dimer of alpha and beta chains. A typical microtubule is a hollow water-filled tube with an outer diameter of 25 nm and an inner diameter of 15 nM. Alpha-beta heterodimers associate head-to-tail to form protofilaments running lengthwise along the microtubule wall with the beta-tubulin subunit facing the microtubule plus end conferring a structural polarity. Microtubules usually have 13 protofilaments but different protofilament numbers can be found in some organisms and specialized cells.</text>
</comment>
<comment type="subcellular location">
    <subcellularLocation>
        <location>Cytoplasm</location>
        <location>Cytoskeleton</location>
    </subcellularLocation>
</comment>
<comment type="similarity">
    <text evidence="3">Belongs to the tubulin family.</text>
</comment>
<feature type="chain" id="PRO_0000048194" description="Tubulin alpha chain">
    <location>
        <begin position="1"/>
        <end position="450"/>
    </location>
</feature>
<feature type="active site" evidence="2">
    <location>
        <position position="254"/>
    </location>
</feature>
<feature type="binding site" evidence="2">
    <location>
        <position position="11"/>
    </location>
    <ligand>
        <name>GTP</name>
        <dbReference type="ChEBI" id="CHEBI:37565"/>
    </ligand>
</feature>
<feature type="binding site" evidence="2">
    <location>
        <position position="71"/>
    </location>
    <ligand>
        <name>GTP</name>
        <dbReference type="ChEBI" id="CHEBI:37565"/>
    </ligand>
</feature>
<feature type="binding site" evidence="2">
    <location>
        <position position="71"/>
    </location>
    <ligand>
        <name>Mg(2+)</name>
        <dbReference type="ChEBI" id="CHEBI:18420"/>
    </ligand>
</feature>
<feature type="binding site" evidence="2">
    <location>
        <position position="140"/>
    </location>
    <ligand>
        <name>GTP</name>
        <dbReference type="ChEBI" id="CHEBI:37565"/>
    </ligand>
</feature>
<feature type="binding site" evidence="2">
    <location>
        <position position="144"/>
    </location>
    <ligand>
        <name>GTP</name>
        <dbReference type="ChEBI" id="CHEBI:37565"/>
    </ligand>
</feature>
<feature type="binding site" evidence="2">
    <location>
        <position position="145"/>
    </location>
    <ligand>
        <name>GTP</name>
        <dbReference type="ChEBI" id="CHEBI:37565"/>
    </ligand>
</feature>
<feature type="binding site" evidence="2">
    <location>
        <position position="179"/>
    </location>
    <ligand>
        <name>GTP</name>
        <dbReference type="ChEBI" id="CHEBI:37565"/>
    </ligand>
</feature>
<feature type="binding site" evidence="2">
    <location>
        <position position="206"/>
    </location>
    <ligand>
        <name>GTP</name>
        <dbReference type="ChEBI" id="CHEBI:37565"/>
    </ligand>
</feature>
<feature type="binding site" evidence="2">
    <location>
        <position position="228"/>
    </location>
    <ligand>
        <name>GTP</name>
        <dbReference type="ChEBI" id="CHEBI:37565"/>
    </ligand>
</feature>
<feature type="site" description="Involved in polymerization" evidence="1">
    <location>
        <position position="450"/>
    </location>
</feature>
<sequence length="450" mass="50008">MREVISLNVGQAGCQIANSCWELYCLEHGIQPDGYLTEERKAAEDDDGFSTFFSETGNGKYVPRTIYADLEPNVVDEVRTGTYRSLFHPELMITGKEDASNNYARGHYTVGKELIDQVLDKVRHVADNCSGLQGFLVFHSFGGGTGSGFGALLMERLSVDYGKKCKLEFCVYPAPQVATSVVEPYNSILTTHTTLEHSDCSFMVDNEAIYDICRRNLGIERPNYENLNRLIAQVVSSITASLRFDGSLNVDLNEFQTNLVPYPRIHFPLVAYAPIVSAAKAAHEANSVQEISMSCFEPNSQMVKCDPRNGKYMATCLLYRGDVVPKDVHQAVATLKTKRTIQFVDWCPTGFKIGICYQPPQNVPNGDLAKVNRAVCMLSNTTAIAEAWSALSHKFDLMYSKRAFVHWYVGEGMEEGEFSEAREDLAALERDYEEVAADSAEGDEGGEAEY</sequence>
<reference key="1">
    <citation type="journal article" date="1998" name="Cell Motil. Cytoskeleton">
        <title>Isolation and characterization of alpha-tubulin genes from Septoria tritici and Rhynchosporium secalis, and comparative analysis of fungal alpha-tubulin sequences.</title>
        <authorList>
            <person name="Rohel E.A."/>
            <person name="Payne A.C."/>
            <person name="Hall L."/>
            <person name="Barker H."/>
            <person name="Butters J."/>
            <person name="Holloman D.W."/>
        </authorList>
    </citation>
    <scope>NUCLEOTIDE SEQUENCE [GENOMIC DNA]</scope>
    <source>
        <strain>ST16</strain>
    </source>
</reference>
<dbReference type="EC" id="3.6.5.-" evidence="2"/>
<dbReference type="EMBL" id="Y14509">
    <property type="protein sequence ID" value="CAA74849.1"/>
    <property type="molecule type" value="Genomic_DNA"/>
</dbReference>
<dbReference type="SMR" id="O94128"/>
<dbReference type="VEuPathDB" id="FungiDB:ZT3D1_G9572"/>
<dbReference type="VEuPathDB" id="FungiDB:ZTRI_10.67"/>
<dbReference type="GO" id="GO:0005737">
    <property type="term" value="C:cytoplasm"/>
    <property type="evidence" value="ECO:0007669"/>
    <property type="project" value="UniProtKB-KW"/>
</dbReference>
<dbReference type="GO" id="GO:0005874">
    <property type="term" value="C:microtubule"/>
    <property type="evidence" value="ECO:0007669"/>
    <property type="project" value="UniProtKB-KW"/>
</dbReference>
<dbReference type="GO" id="GO:0005525">
    <property type="term" value="F:GTP binding"/>
    <property type="evidence" value="ECO:0007669"/>
    <property type="project" value="UniProtKB-KW"/>
</dbReference>
<dbReference type="GO" id="GO:0016787">
    <property type="term" value="F:hydrolase activity"/>
    <property type="evidence" value="ECO:0007669"/>
    <property type="project" value="UniProtKB-KW"/>
</dbReference>
<dbReference type="GO" id="GO:0046872">
    <property type="term" value="F:metal ion binding"/>
    <property type="evidence" value="ECO:0007669"/>
    <property type="project" value="UniProtKB-KW"/>
</dbReference>
<dbReference type="GO" id="GO:0005200">
    <property type="term" value="F:structural constituent of cytoskeleton"/>
    <property type="evidence" value="ECO:0007669"/>
    <property type="project" value="InterPro"/>
</dbReference>
<dbReference type="GO" id="GO:0007017">
    <property type="term" value="P:microtubule-based process"/>
    <property type="evidence" value="ECO:0007669"/>
    <property type="project" value="InterPro"/>
</dbReference>
<dbReference type="CDD" id="cd02186">
    <property type="entry name" value="alpha_tubulin"/>
    <property type="match status" value="1"/>
</dbReference>
<dbReference type="FunFam" id="1.10.287.600:FF:000005">
    <property type="entry name" value="Tubulin alpha chain"/>
    <property type="match status" value="1"/>
</dbReference>
<dbReference type="FunFam" id="3.30.1330.20:FF:000001">
    <property type="entry name" value="Tubulin alpha chain"/>
    <property type="match status" value="1"/>
</dbReference>
<dbReference type="FunFam" id="3.40.50.1440:FF:000008">
    <property type="entry name" value="Tubulin alpha chain"/>
    <property type="match status" value="1"/>
</dbReference>
<dbReference type="Gene3D" id="1.10.287.600">
    <property type="entry name" value="Helix hairpin bin"/>
    <property type="match status" value="1"/>
</dbReference>
<dbReference type="Gene3D" id="3.30.1330.20">
    <property type="entry name" value="Tubulin/FtsZ, C-terminal domain"/>
    <property type="match status" value="1"/>
</dbReference>
<dbReference type="Gene3D" id="3.40.50.1440">
    <property type="entry name" value="Tubulin/FtsZ, GTPase domain"/>
    <property type="match status" value="1"/>
</dbReference>
<dbReference type="InterPro" id="IPR002452">
    <property type="entry name" value="Alpha_tubulin"/>
</dbReference>
<dbReference type="InterPro" id="IPR008280">
    <property type="entry name" value="Tub_FtsZ_C"/>
</dbReference>
<dbReference type="InterPro" id="IPR000217">
    <property type="entry name" value="Tubulin"/>
</dbReference>
<dbReference type="InterPro" id="IPR037103">
    <property type="entry name" value="Tubulin/FtsZ-like_C"/>
</dbReference>
<dbReference type="InterPro" id="IPR018316">
    <property type="entry name" value="Tubulin/FtsZ_2-layer-sand-dom"/>
</dbReference>
<dbReference type="InterPro" id="IPR036525">
    <property type="entry name" value="Tubulin/FtsZ_GTPase_sf"/>
</dbReference>
<dbReference type="InterPro" id="IPR023123">
    <property type="entry name" value="Tubulin_C"/>
</dbReference>
<dbReference type="InterPro" id="IPR017975">
    <property type="entry name" value="Tubulin_CS"/>
</dbReference>
<dbReference type="InterPro" id="IPR003008">
    <property type="entry name" value="Tubulin_FtsZ_GTPase"/>
</dbReference>
<dbReference type="PANTHER" id="PTHR11588">
    <property type="entry name" value="TUBULIN"/>
    <property type="match status" value="1"/>
</dbReference>
<dbReference type="Pfam" id="PF00091">
    <property type="entry name" value="Tubulin"/>
    <property type="match status" value="1"/>
</dbReference>
<dbReference type="Pfam" id="PF03953">
    <property type="entry name" value="Tubulin_C"/>
    <property type="match status" value="1"/>
</dbReference>
<dbReference type="PRINTS" id="PR01162">
    <property type="entry name" value="ALPHATUBULIN"/>
</dbReference>
<dbReference type="PRINTS" id="PR01161">
    <property type="entry name" value="TUBULIN"/>
</dbReference>
<dbReference type="SMART" id="SM00864">
    <property type="entry name" value="Tubulin"/>
    <property type="match status" value="1"/>
</dbReference>
<dbReference type="SMART" id="SM00865">
    <property type="entry name" value="Tubulin_C"/>
    <property type="match status" value="1"/>
</dbReference>
<dbReference type="SUPFAM" id="SSF55307">
    <property type="entry name" value="Tubulin C-terminal domain-like"/>
    <property type="match status" value="1"/>
</dbReference>
<dbReference type="SUPFAM" id="SSF52490">
    <property type="entry name" value="Tubulin nucleotide-binding domain-like"/>
    <property type="match status" value="1"/>
</dbReference>
<dbReference type="PROSITE" id="PS00227">
    <property type="entry name" value="TUBULIN"/>
    <property type="match status" value="1"/>
</dbReference>